<reference key="1">
    <citation type="journal article" date="1992" name="Proc. Natl. Acad. Sci. U.S.A.">
        <title>Molecular cloning and characterization of MPL, the human homolog of the v-mpl oncogene: identification of a member of the hematopoietic growth factor receptor superfamily.</title>
        <authorList>
            <person name="Vigon I."/>
            <person name="Mornon J.-P."/>
            <person name="Cocault L."/>
            <person name="Mitjavila M.-T."/>
            <person name="Tambourin P."/>
            <person name="Gisselbrecht S."/>
            <person name="Souyri M."/>
        </authorList>
    </citation>
    <scope>NUCLEOTIDE SEQUENCE [MRNA] (ISOFORMS 1 AND 2)</scope>
</reference>
<reference key="2">
    <citation type="journal article" date="1994" name="Genomics">
        <title>Structure and transcription of the human c-mpl gene (MPL).</title>
        <authorList>
            <person name="Mignotte V."/>
            <person name="Vigon I."/>
            <person name="Boucher de Crevecoeur E."/>
            <person name="Romeo P.-H."/>
            <person name="Lemarchandel V."/>
            <person name="Chretien S."/>
        </authorList>
    </citation>
    <scope>NUCLEOTIDE SEQUENCE (ISOFORMS 1 AND 2)</scope>
</reference>
<reference key="3">
    <citation type="journal article" date="2006" name="Nature">
        <title>The DNA sequence and biological annotation of human chromosome 1.</title>
        <authorList>
            <person name="Gregory S.G."/>
            <person name="Barlow K.F."/>
            <person name="McLay K.E."/>
            <person name="Kaul R."/>
            <person name="Swarbreck D."/>
            <person name="Dunham A."/>
            <person name="Scott C.E."/>
            <person name="Howe K.L."/>
            <person name="Woodfine K."/>
            <person name="Spencer C.C.A."/>
            <person name="Jones M.C."/>
            <person name="Gillson C."/>
            <person name="Searle S."/>
            <person name="Zhou Y."/>
            <person name="Kokocinski F."/>
            <person name="McDonald L."/>
            <person name="Evans R."/>
            <person name="Phillips K."/>
            <person name="Atkinson A."/>
            <person name="Cooper R."/>
            <person name="Jones C."/>
            <person name="Hall R.E."/>
            <person name="Andrews T.D."/>
            <person name="Lloyd C."/>
            <person name="Ainscough R."/>
            <person name="Almeida J.P."/>
            <person name="Ambrose K.D."/>
            <person name="Anderson F."/>
            <person name="Andrew R.W."/>
            <person name="Ashwell R.I.S."/>
            <person name="Aubin K."/>
            <person name="Babbage A.K."/>
            <person name="Bagguley C.L."/>
            <person name="Bailey J."/>
            <person name="Beasley H."/>
            <person name="Bethel G."/>
            <person name="Bird C.P."/>
            <person name="Bray-Allen S."/>
            <person name="Brown J.Y."/>
            <person name="Brown A.J."/>
            <person name="Buckley D."/>
            <person name="Burton J."/>
            <person name="Bye J."/>
            <person name="Carder C."/>
            <person name="Chapman J.C."/>
            <person name="Clark S.Y."/>
            <person name="Clarke G."/>
            <person name="Clee C."/>
            <person name="Cobley V."/>
            <person name="Collier R.E."/>
            <person name="Corby N."/>
            <person name="Coville G.J."/>
            <person name="Davies J."/>
            <person name="Deadman R."/>
            <person name="Dunn M."/>
            <person name="Earthrowl M."/>
            <person name="Ellington A.G."/>
            <person name="Errington H."/>
            <person name="Frankish A."/>
            <person name="Frankland J."/>
            <person name="French L."/>
            <person name="Garner P."/>
            <person name="Garnett J."/>
            <person name="Gay L."/>
            <person name="Ghori M.R.J."/>
            <person name="Gibson R."/>
            <person name="Gilby L.M."/>
            <person name="Gillett W."/>
            <person name="Glithero R.J."/>
            <person name="Grafham D.V."/>
            <person name="Griffiths C."/>
            <person name="Griffiths-Jones S."/>
            <person name="Grocock R."/>
            <person name="Hammond S."/>
            <person name="Harrison E.S.I."/>
            <person name="Hart E."/>
            <person name="Haugen E."/>
            <person name="Heath P.D."/>
            <person name="Holmes S."/>
            <person name="Holt K."/>
            <person name="Howden P.J."/>
            <person name="Hunt A.R."/>
            <person name="Hunt S.E."/>
            <person name="Hunter G."/>
            <person name="Isherwood J."/>
            <person name="James R."/>
            <person name="Johnson C."/>
            <person name="Johnson D."/>
            <person name="Joy A."/>
            <person name="Kay M."/>
            <person name="Kershaw J.K."/>
            <person name="Kibukawa M."/>
            <person name="Kimberley A.M."/>
            <person name="King A."/>
            <person name="Knights A.J."/>
            <person name="Lad H."/>
            <person name="Laird G."/>
            <person name="Lawlor S."/>
            <person name="Leongamornlert D.A."/>
            <person name="Lloyd D.M."/>
            <person name="Loveland J."/>
            <person name="Lovell J."/>
            <person name="Lush M.J."/>
            <person name="Lyne R."/>
            <person name="Martin S."/>
            <person name="Mashreghi-Mohammadi M."/>
            <person name="Matthews L."/>
            <person name="Matthews N.S.W."/>
            <person name="McLaren S."/>
            <person name="Milne S."/>
            <person name="Mistry S."/>
            <person name="Moore M.J.F."/>
            <person name="Nickerson T."/>
            <person name="O'Dell C.N."/>
            <person name="Oliver K."/>
            <person name="Palmeiri A."/>
            <person name="Palmer S.A."/>
            <person name="Parker A."/>
            <person name="Patel D."/>
            <person name="Pearce A.V."/>
            <person name="Peck A.I."/>
            <person name="Pelan S."/>
            <person name="Phelps K."/>
            <person name="Phillimore B.J."/>
            <person name="Plumb R."/>
            <person name="Rajan J."/>
            <person name="Raymond C."/>
            <person name="Rouse G."/>
            <person name="Saenphimmachak C."/>
            <person name="Sehra H.K."/>
            <person name="Sheridan E."/>
            <person name="Shownkeen R."/>
            <person name="Sims S."/>
            <person name="Skuce C.D."/>
            <person name="Smith M."/>
            <person name="Steward C."/>
            <person name="Subramanian S."/>
            <person name="Sycamore N."/>
            <person name="Tracey A."/>
            <person name="Tromans A."/>
            <person name="Van Helmond Z."/>
            <person name="Wall M."/>
            <person name="Wallis J.M."/>
            <person name="White S."/>
            <person name="Whitehead S.L."/>
            <person name="Wilkinson J.E."/>
            <person name="Willey D.L."/>
            <person name="Williams H."/>
            <person name="Wilming L."/>
            <person name="Wray P.W."/>
            <person name="Wu Z."/>
            <person name="Coulson A."/>
            <person name="Vaudin M."/>
            <person name="Sulston J.E."/>
            <person name="Durbin R.M."/>
            <person name="Hubbard T."/>
            <person name="Wooster R."/>
            <person name="Dunham I."/>
            <person name="Carter N.P."/>
            <person name="McVean G."/>
            <person name="Ross M.T."/>
            <person name="Harrow J."/>
            <person name="Olson M.V."/>
            <person name="Beck S."/>
            <person name="Rogers J."/>
            <person name="Bentley D.R."/>
        </authorList>
    </citation>
    <scope>NUCLEOTIDE SEQUENCE [LARGE SCALE GENOMIC DNA]</scope>
</reference>
<reference key="4">
    <citation type="submission" date="2005-09" db="EMBL/GenBank/DDBJ databases">
        <authorList>
            <person name="Mural R.J."/>
            <person name="Istrail S."/>
            <person name="Sutton G.G."/>
            <person name="Florea L."/>
            <person name="Halpern A.L."/>
            <person name="Mobarry C.M."/>
            <person name="Lippert R."/>
            <person name="Walenz B."/>
            <person name="Shatkay H."/>
            <person name="Dew I."/>
            <person name="Miller J.R."/>
            <person name="Flanigan M.J."/>
            <person name="Edwards N.J."/>
            <person name="Bolanos R."/>
            <person name="Fasulo D."/>
            <person name="Halldorsson B.V."/>
            <person name="Hannenhalli S."/>
            <person name="Turner R."/>
            <person name="Yooseph S."/>
            <person name="Lu F."/>
            <person name="Nusskern D.R."/>
            <person name="Shue B.C."/>
            <person name="Zheng X.H."/>
            <person name="Zhong F."/>
            <person name="Delcher A.L."/>
            <person name="Huson D.H."/>
            <person name="Kravitz S.A."/>
            <person name="Mouchard L."/>
            <person name="Reinert K."/>
            <person name="Remington K.A."/>
            <person name="Clark A.G."/>
            <person name="Waterman M.S."/>
            <person name="Eichler E.E."/>
            <person name="Adams M.D."/>
            <person name="Hunkapiller M.W."/>
            <person name="Myers E.W."/>
            <person name="Venter J.C."/>
        </authorList>
    </citation>
    <scope>NUCLEOTIDE SEQUENCE [LARGE SCALE GENOMIC DNA]</scope>
</reference>
<reference key="5">
    <citation type="journal article" date="2005" name="J. Biol. Chem.">
        <title>Janus kinases affect thrombopoietin receptor cell surface localization and stability.</title>
        <authorList>
            <person name="Royer Y."/>
            <person name="Staerk J."/>
            <person name="Costuleanu M."/>
            <person name="Courtoy P.J."/>
            <person name="Constantinescu S.N."/>
        </authorList>
    </citation>
    <scope>FUNCTION</scope>
    <scope>INTERACTION WITH JAK2 AND TYK2</scope>
    <scope>SUBCELLULAR LOCATION</scope>
    <scope>MUTAGENESIS OF LEU-528 AND TRP-529</scope>
</reference>
<reference key="6">
    <citation type="journal article" date="2010" name="Blood">
        <title>Ubiquitination and degradation of the thrombopoietin receptor c-Mpl.</title>
        <authorList>
            <person name="Saur S.J."/>
            <person name="Sangkhae V."/>
            <person name="Geddis A.E."/>
            <person name="Kaushansky K."/>
            <person name="Hitchcock I.S."/>
        </authorList>
    </citation>
    <scope>UBIQUITINATION AT LYS-553 AND LYS573</scope>
</reference>
<reference key="7">
    <citation type="journal article" date="2014" name="Exp. Hematol.">
        <title>Phosphorylated c-Mpl tyrosine 591 regulates thrombopoietin-induced signaling.</title>
        <authorList>
            <person name="Sangkhae V."/>
            <person name="Saur S.J."/>
            <person name="Kaushansky A."/>
            <person name="Kaushansky K."/>
            <person name="Hitchcock I.S."/>
        </authorList>
    </citation>
    <scope>FUNCTION</scope>
    <scope>PHOSPHORYLATION AT TYR-591</scope>
    <scope>MUTAGENESIS OF TYR-591</scope>
    <scope>INTERACTION WITH SHIP/INPP5D; SYK AND BTK</scope>
</reference>
<reference key="8">
    <citation type="journal article" date="1999" name="Nat. Genet.">
        <title>Characterization of single-nucleotide polymorphisms in coding regions of human genes.</title>
        <authorList>
            <person name="Cargill M."/>
            <person name="Altshuler D."/>
            <person name="Ireland J."/>
            <person name="Sklar P."/>
            <person name="Ardlie K."/>
            <person name="Patil N."/>
            <person name="Shaw N."/>
            <person name="Lane C.R."/>
            <person name="Lim E.P."/>
            <person name="Kalyanaraman N."/>
            <person name="Nemesh J."/>
            <person name="Ziaugra L."/>
            <person name="Friedland L."/>
            <person name="Rolfe A."/>
            <person name="Warrington J."/>
            <person name="Lipshutz R."/>
            <person name="Daley G.Q."/>
            <person name="Lander E.S."/>
        </authorList>
    </citation>
    <scope>VARIANTS VAL-58 AND LYS-168</scope>
</reference>
<reference key="9">
    <citation type="journal article" date="1999" name="Nat. Genet.">
        <authorList>
            <person name="Cargill M."/>
            <person name="Altshuler D."/>
            <person name="Ireland J."/>
            <person name="Sklar P."/>
            <person name="Ardlie K."/>
            <person name="Patil N."/>
            <person name="Shaw N."/>
            <person name="Lane C.R."/>
            <person name="Lim E.P."/>
            <person name="Kalyanaraman N."/>
            <person name="Nemesh J."/>
            <person name="Ziaugra L."/>
            <person name="Friedland L."/>
            <person name="Rolfe A."/>
            <person name="Warrington J."/>
            <person name="Lipshutz R."/>
            <person name="Daley G.Q."/>
            <person name="Lander E.S."/>
        </authorList>
    </citation>
    <scope>ERRATUM OF PUBMED:10391209</scope>
</reference>
<reference key="10">
    <citation type="journal article" date="2002" name="J. Biol. Chem.">
        <title>Cloning and characterization of a family of proteins associated with Mpl.</title>
        <authorList>
            <person name="Meunier C.F."/>
            <person name="Bordereaux D."/>
            <person name="Porteu F."/>
            <person name="Gisselbrecht S."/>
            <person name="Chretien S."/>
            <person name="Courtois G."/>
        </authorList>
    </citation>
    <scope>INTERACTION WITH ATXN2L</scope>
</reference>
<reference key="11">
    <citation type="journal article" date="2020" name="Science">
        <title>Mechanism of homodimeric cytokine receptor activation and dysregulation by oncogenic mutations.</title>
        <authorList>
            <person name="Wilmes S."/>
            <person name="Hafer M."/>
            <person name="Vuorio J."/>
            <person name="Tucker J.A."/>
            <person name="Winkelmann H."/>
            <person name="Loechte S."/>
            <person name="Stanly T.A."/>
            <person name="Pulgar Prieto K.D."/>
            <person name="Poojari C."/>
            <person name="Sharma V."/>
            <person name="Richter C.P."/>
            <person name="Kurre R."/>
            <person name="Hubbard S.R."/>
            <person name="Garcia K.C."/>
            <person name="Moraga I."/>
            <person name="Vattulainen I."/>
            <person name="Hitchcock I.S."/>
            <person name="Piehler J."/>
        </authorList>
    </citation>
    <scope>FUNCTION</scope>
    <scope>SUBUNIT</scope>
    <scope>SUBCELLULAR LOCATION</scope>
    <scope>CHARACTERIZATION OF VARIANT THCYT2 LEU-515</scope>
</reference>
<reference evidence="22" key="12">
    <citation type="journal article" date="2023" name="Cell">
        <title>Structure of the thrombopoietin-MPL receptor complex is a blueprint for biasing hematopoiesis.</title>
        <authorList>
            <person name="Tsutsumi N."/>
            <person name="Masoumi Z."/>
            <person name="James S.C."/>
            <person name="Tucker J.A."/>
            <person name="Winkelmann H."/>
            <person name="Grey W."/>
            <person name="Picton L.K."/>
            <person name="Moss L."/>
            <person name="Wilson S.C."/>
            <person name="Caveney N.A."/>
            <person name="Jude K.M."/>
            <person name="Gati C."/>
            <person name="Piehler J."/>
            <person name="Hitchcock I.S."/>
            <person name="Garcia K.C."/>
        </authorList>
    </citation>
    <scope>STRUCTURE BY ELECTRON MICROSCOPY (3.40 ANGSTROMS) OF 26-635</scope>
    <scope>DISULFIDE BONDS</scope>
    <scope>FUNCTION</scope>
    <scope>INTERACTION WITH THPO</scope>
</reference>
<reference key="13">
    <citation type="journal article" date="2004" name="Blood">
        <title>Familial essential thrombocythemia associated with a dominant-positive activating mutation of the c-MPL gene, which encodes for the receptor for thrombopoietin.</title>
        <authorList>
            <person name="Ding J."/>
            <person name="Komatsu H."/>
            <person name="Wakita A."/>
            <person name="Kato-Uranishi M."/>
            <person name="Ito M."/>
            <person name="Satoh A."/>
            <person name="Tsuboi K."/>
            <person name="Nitta M."/>
            <person name="Miyazaki H."/>
            <person name="Iida S."/>
            <person name="Ueda R."/>
        </authorList>
    </citation>
    <scope>VARIANT THCYT2 ASN-505</scope>
</reference>
<reference key="14">
    <citation type="journal article" date="2004" name="Proc. Natl. Acad. Sci. U.S.A.">
        <title>Mpl Baltimore: a thrombopoietin receptor polymorphism associated with thrombocytosis.</title>
        <authorList>
            <person name="Moliterno A.R."/>
            <person name="Williams D.M."/>
            <person name="Gutierrez-Alamillo L.I."/>
            <person name="Salvatori R."/>
            <person name="Ingersoll R.G."/>
            <person name="Spivak J.L."/>
        </authorList>
    </citation>
    <scope>VARIANT ASN-39</scope>
    <scope>CHARACTERIZATION OF VARIANT ASN-39</scope>
</reference>
<reference key="15">
    <citation type="journal article" date="2006" name="Blood">
        <title>MPL515 mutations in myeloproliferative and other myeloid disorders: a study of 1182 patients.</title>
        <authorList>
            <person name="Pardanani A.D."/>
            <person name="Levine R.L."/>
            <person name="Lasho T."/>
            <person name="Pikman Y."/>
            <person name="Mesa R.A."/>
            <person name="Wadleigh M."/>
            <person name="Steensma D.P."/>
            <person name="Elliott M.A."/>
            <person name="Wolanskyj A.P."/>
            <person name="Hogan W.J."/>
            <person name="McClure R.F."/>
            <person name="Litzow M.R."/>
            <person name="Gilliland D.G."/>
            <person name="Tefferi A."/>
        </authorList>
    </citation>
    <scope>VARIANT MMM LYS-515</scope>
</reference>
<reference key="16">
    <citation type="journal article" date="2006" name="Hum. Mutat.">
        <title>MPL mutations in 23 patients suffering from congenital amegakaryocytic thrombocytopenia: the type of mutation predicts the course of the disease.</title>
        <authorList>
            <person name="Germeshausen M."/>
            <person name="Ballmaier M."/>
            <person name="Welte K."/>
        </authorList>
    </citation>
    <scope>VARIANTS CAMT1 CYS-102; PRO-102; SER-104; LEU-136; ARG-154; LEU-257; THR-275; CYS-435 AND TRP-594</scope>
</reference>
<reference key="17">
    <citation type="journal article" date="2006" name="PLoS Med.">
        <title>MPLW515L is a novel somatic activating mutation in myelofibrosis with myeloid metaplasia.</title>
        <authorList>
            <person name="Pikman Y."/>
            <person name="Lee B.H."/>
            <person name="Mercher T."/>
            <person name="McDowell E."/>
            <person name="Ebert B.L."/>
            <person name="Gozo M."/>
            <person name="Cuker A."/>
            <person name="Wernig G."/>
            <person name="Moore S."/>
            <person name="Galinsky I."/>
            <person name="DeAngelo D.J."/>
            <person name="Clark J.J."/>
            <person name="Lee S.J."/>
            <person name="Golub T.R."/>
            <person name="Wadleigh M."/>
            <person name="Gilliland D.G."/>
            <person name="Levine R.L."/>
        </authorList>
    </citation>
    <scope>VARIANT MMM LEU-515</scope>
    <scope>CHARACTERIZATION OF VARIANT MMM LEU-515</scope>
</reference>
<reference key="18">
    <citation type="journal article" date="2009" name="Blood">
        <title>The Asn505 mutation of the c-MPL gene, which causes familial essential thrombocythemia, induces autonomous homodimerization of the c-Mpl protein due to strong amino acid polarity.</title>
        <authorList>
            <person name="Ding J."/>
            <person name="Komatsu H."/>
            <person name="Iida S."/>
            <person name="Yano H."/>
            <person name="Kusumoto S."/>
            <person name="Inagaki A."/>
            <person name="Mori F."/>
            <person name="Ri M."/>
            <person name="Ito A."/>
            <person name="Wakita A."/>
            <person name="Ishida T."/>
            <person name="Nitta M."/>
            <person name="Ueda R."/>
        </authorList>
    </citation>
    <scope>CHARACTERIZATION OF VARIANT THCYT2 ASN-505</scope>
</reference>
<reference key="19">
    <citation type="journal article" date="2013" name="Pediatr. Blood Cancer">
        <title>MPL W515L mutation in pediatric essential thrombocythemia.</title>
        <authorList>
            <person name="Farruggia P."/>
            <person name="D'Angelo P."/>
            <person name="La Rosa M."/>
            <person name="Scibetta N."/>
            <person name="Santangelo G."/>
            <person name="Lo Bello A."/>
            <person name="Duner E."/>
            <person name="Randi M.L."/>
            <person name="Putti M.C."/>
            <person name="Santoro A."/>
        </authorList>
    </citation>
    <scope>VARIANT THCYT2 LEU-515</scope>
</reference>
<reference key="20">
    <citation type="journal article" date="2015" name="Blood">
        <title>The thrombopoietin receptor P106L mutation functionally separates receptor signaling activity from thrombopoietin homeostasis.</title>
        <authorList>
            <person name="Stockklausner C."/>
            <person name="Klotter A.C."/>
            <person name="Dickemann N."/>
            <person name="Kuhlee I.N."/>
            <person name="Duffert C.M."/>
            <person name="Kerber C."/>
            <person name="Gehring N.H."/>
            <person name="Kulozik A.E."/>
        </authorList>
    </citation>
    <scope>VARIANT THCYT2 LEU-106</scope>
    <scope>CHARACTERIZATION OF VARIANT THCYT2 LEU-106</scope>
    <scope>CHARACTERIZATION OF VARIANTS CAMT1 PRO-102 AND SER-104</scope>
    <scope>GLYCOSYLATION</scope>
    <scope>SUBCELLULAR LOCATION</scope>
    <scope>SUBUNIT</scope>
</reference>
<feature type="signal peptide" evidence="2">
    <location>
        <begin position="1"/>
        <end position="25"/>
    </location>
</feature>
<feature type="chain" id="PRO_0000010987" description="Thrombopoietin receptor">
    <location>
        <begin position="26"/>
        <end position="635"/>
    </location>
</feature>
<feature type="topological domain" description="Extracellular" evidence="2">
    <location>
        <begin position="26"/>
        <end position="491"/>
    </location>
</feature>
<feature type="transmembrane region" description="Helical" evidence="2">
    <location>
        <begin position="492"/>
        <end position="513"/>
    </location>
</feature>
<feature type="topological domain" description="Cytoplasmic" evidence="2">
    <location>
        <begin position="514"/>
        <end position="635"/>
    </location>
</feature>
<feature type="domain" description="Fibronectin type-III 1" evidence="3">
    <location>
        <begin position="172"/>
        <end position="281"/>
    </location>
</feature>
<feature type="domain" description="Fibronectin type-III 2" evidence="3">
    <location>
        <begin position="392"/>
        <end position="486"/>
    </location>
</feature>
<feature type="region of interest" description="Disordered" evidence="4">
    <location>
        <begin position="205"/>
        <end position="232"/>
    </location>
</feature>
<feature type="short sequence motif" description="WSXWS motif">
    <location>
        <begin position="474"/>
        <end position="478"/>
    </location>
</feature>
<feature type="short sequence motif" description="Box 1 motif">
    <location>
        <begin position="528"/>
        <end position="536"/>
    </location>
</feature>
<feature type="modified residue" description="Phosphotyrosine" evidence="16">
    <location>
        <position position="591"/>
    </location>
</feature>
<feature type="modified residue" description="Phosphotyrosine" evidence="1">
    <location>
        <position position="626"/>
    </location>
</feature>
<feature type="modified residue" description="Phosphotyrosine" evidence="1">
    <location>
        <position position="631"/>
    </location>
</feature>
<feature type="glycosylation site" description="N-linked (GlcNAc...) asparagine" evidence="2">
    <location>
        <position position="117"/>
    </location>
</feature>
<feature type="glycosylation site" description="N-linked (GlcNAc...) asparagine" evidence="2">
    <location>
        <position position="178"/>
    </location>
</feature>
<feature type="glycosylation site" description="N-linked (GlcNAc...) asparagine" evidence="2">
    <location>
        <position position="298"/>
    </location>
</feature>
<feature type="glycosylation site" description="N-linked (GlcNAc...) asparagine" evidence="2">
    <location>
        <position position="358"/>
    </location>
</feature>
<feature type="disulfide bond" evidence="19 22">
    <location>
        <begin position="40"/>
        <end position="50"/>
    </location>
</feature>
<feature type="disulfide bond" evidence="19 22">
    <location>
        <begin position="77"/>
        <end position="93"/>
    </location>
</feature>
<feature type="disulfide bond" evidence="19 22">
    <location>
        <begin position="193"/>
        <end position="323"/>
    </location>
</feature>
<feature type="disulfide bond" evidence="19 22">
    <location>
        <begin position="194"/>
        <end position="241"/>
    </location>
</feature>
<feature type="disulfide bond" evidence="19 22">
    <location>
        <begin position="291"/>
        <end position="301"/>
    </location>
</feature>
<feature type="disulfide bond" evidence="19 22">
    <location>
        <begin position="334"/>
        <end position="352"/>
    </location>
</feature>
<feature type="cross-link" description="Glycyl lysine isopeptide (Lys-Gly) (interchain with G-Cter in ubiquitin)" evidence="14">
    <location>
        <position position="553"/>
    </location>
</feature>
<feature type="cross-link" description="Glycyl lysine isopeptide (Lys-Gly) (interchain with G-Cter in ubiquitin)">
    <location>
        <position position="573"/>
    </location>
</feature>
<feature type="splice variant" id="VSP_001734" description="In isoform 2." evidence="20">
    <original>RLRHALWPSLPDLHRVLGQYLRDTAALSPPKATVSDTCEEVEPSLLEILPKSSERTP</original>
    <variation>YRPRQAGDWRWTRWSRTCKQAFLVRSVTPDLRPPPVRTYGFALPARHLWDSPRLLTL</variation>
    <location>
        <begin position="523"/>
        <end position="579"/>
    </location>
</feature>
<feature type="splice variant" id="VSP_001735" description="In isoform 2." evidence="20">
    <location>
        <begin position="580"/>
        <end position="635"/>
    </location>
</feature>
<feature type="sequence variant" id="VAR_049173" description="Risk factor for thrombocytosis; results in altered MPL expression; dbSNP:rs17292650." evidence="8">
    <original>K</original>
    <variation>N</variation>
    <location>
        <position position="39"/>
    </location>
</feature>
<feature type="sequence variant" id="VAR_011988" description="In dbSNP:rs6087." evidence="5">
    <original>A</original>
    <variation>V</variation>
    <location>
        <position position="58"/>
    </location>
</feature>
<feature type="sequence variant" id="VAR_073030" description="In CAMT1; dbSNP:rs763568293." evidence="10">
    <original>R</original>
    <variation>C</variation>
    <location>
        <position position="102"/>
    </location>
</feature>
<feature type="sequence variant" id="VAR_073031" description="In CAMT1; loss of function; loss of membrane localization, impaired glycosylation; dbSNP:rs28928907." evidence="10 17">
    <original>R</original>
    <variation>P</variation>
    <location>
        <position position="102"/>
    </location>
</feature>
<feature type="sequence variant" id="VAR_073032" description="In CAMT1; loss of function; dbSNP:rs1196161699." evidence="10 17">
    <original>F</original>
    <variation>S</variation>
    <location>
        <position position="104"/>
    </location>
</feature>
<feature type="sequence variant" id="VAR_073033" description="In THCYT2; gain of function; loss of membrane localization, impaired glycosylation; dbSNP:rs750046020." evidence="17">
    <original>P</original>
    <variation>L</variation>
    <location>
        <position position="106"/>
    </location>
</feature>
<feature type="sequence variant" id="VAR_049174" description="In dbSNP:rs12731981.">
    <original>V</original>
    <variation>M</variation>
    <location>
        <position position="114"/>
    </location>
</feature>
<feature type="sequence variant" id="VAR_073034" description="In CAMT1; dbSNP:rs764904424." evidence="10">
    <original>P</original>
    <variation>L</variation>
    <location>
        <position position="136"/>
    </location>
</feature>
<feature type="sequence variant" id="VAR_073035" description="In CAMT1; dbSNP:rs758428763." evidence="10">
    <original>W</original>
    <variation>R</variation>
    <location>
        <position position="154"/>
    </location>
</feature>
<feature type="sequence variant" id="VAR_011989" description="In dbSNP:rs6088." evidence="5">
    <original>E</original>
    <variation>K</variation>
    <location>
        <position position="168"/>
    </location>
</feature>
<feature type="sequence variant" id="VAR_073036" description="In CAMT1." evidence="10">
    <original>R</original>
    <variation>L</variation>
    <location>
        <position position="257"/>
    </location>
</feature>
<feature type="sequence variant" id="VAR_073037" description="In CAMT1; dbSNP:rs28928908." evidence="10">
    <original>P</original>
    <variation>T</variation>
    <location>
        <position position="275"/>
    </location>
</feature>
<feature type="sequence variant" id="VAR_073038" description="In CAMT1; dbSNP:rs1006158872." evidence="10">
    <original>W</original>
    <variation>C</variation>
    <location>
        <position position="435"/>
    </location>
</feature>
<feature type="sequence variant" id="VAR_067559" description="In THCYT2; activating mutation; induces MPL autonomous dimerization and signal activation in the absence of the ligand; dbSNP:rs121913614." evidence="7 13">
    <original>S</original>
    <variation>N</variation>
    <location>
        <position position="505"/>
    </location>
</feature>
<feature type="sequence variant" id="VAR_067560" description="In MMM; somatic mutation; requires 2 nucleotide substitutions; dbSNP:rs121913616." evidence="12">
    <original>W</original>
    <variation>K</variation>
    <location>
        <position position="515"/>
    </location>
</feature>
<feature type="sequence variant" id="VAR_067561" description="In THCYT2 and MMM; somatic mutation in myelofibrosis with myeloid metaplasia; results in cytokine-independent growth and thrombopoietin hypersensitivity; results in constitutive activation of JAK-STAT signaling pathway; substantial dimerization in the absence of ligand; dbSNP:rs121913615." evidence="11 15 18">
    <original>W</original>
    <variation>L</variation>
    <location>
        <position position="515"/>
    </location>
</feature>
<feature type="sequence variant" id="VAR_073039" description="In CAMT1; dbSNP:rs1448812001." evidence="10">
    <original>L</original>
    <variation>W</variation>
    <location>
        <position position="594"/>
    </location>
</feature>
<feature type="mutagenesis site" description="About 75% loss of cell surface expression; when associated with A-529." evidence="18">
    <original>L</original>
    <variation>A</variation>
    <location>
        <position position="528"/>
    </location>
</feature>
<feature type="mutagenesis site" description="About 75% loss of cell surface expression; when associated with A-528." evidence="18">
    <original>W</original>
    <variation>A</variation>
    <location>
        <position position="529"/>
    </location>
</feature>
<feature type="mutagenesis site" description="Exhibits enhanced and prolonged ERK1/2 activation upon THPO stimulation." evidence="16">
    <original>Y</original>
    <variation>F</variation>
    <location>
        <position position="591"/>
    </location>
</feature>
<feature type="helix" evidence="23">
    <location>
        <begin position="28"/>
        <end position="30"/>
    </location>
</feature>
<feature type="strand" evidence="23">
    <location>
        <begin position="37"/>
        <end position="41"/>
    </location>
</feature>
<feature type="strand" evidence="23">
    <location>
        <begin position="43"/>
        <end position="46"/>
    </location>
</feature>
<feature type="strand" evidence="23">
    <location>
        <begin position="49"/>
        <end position="56"/>
    </location>
</feature>
<feature type="strand" evidence="23">
    <location>
        <begin position="63"/>
        <end position="68"/>
    </location>
</feature>
<feature type="strand" evidence="23">
    <location>
        <begin position="70"/>
        <end position="72"/>
    </location>
</feature>
<feature type="strand" evidence="23">
    <location>
        <begin position="75"/>
        <end position="77"/>
    </location>
</feature>
<feature type="strand" evidence="23">
    <location>
        <begin position="79"/>
        <end position="83"/>
    </location>
</feature>
<feature type="strand" evidence="23">
    <location>
        <begin position="85"/>
        <end position="87"/>
    </location>
</feature>
<feature type="strand" evidence="23">
    <location>
        <begin position="89"/>
        <end position="93"/>
    </location>
</feature>
<feature type="strand" evidence="23">
    <location>
        <begin position="106"/>
        <end position="113"/>
    </location>
</feature>
<feature type="turn" evidence="23">
    <location>
        <begin position="114"/>
        <end position="116"/>
    </location>
</feature>
<feature type="strand" evidence="23">
    <location>
        <begin position="119"/>
        <end position="126"/>
    </location>
</feature>
<feature type="helix" evidence="23">
    <location>
        <begin position="127"/>
        <end position="129"/>
    </location>
</feature>
<feature type="strand" evidence="23">
    <location>
        <begin position="139"/>
        <end position="143"/>
    </location>
</feature>
<feature type="strand" evidence="23">
    <location>
        <begin position="149"/>
        <end position="155"/>
    </location>
</feature>
<feature type="helix" evidence="23">
    <location>
        <begin position="159"/>
        <end position="161"/>
    </location>
</feature>
<feature type="strand" evidence="23">
    <location>
        <begin position="164"/>
        <end position="173"/>
    </location>
</feature>
<feature type="strand" evidence="23">
    <location>
        <begin position="183"/>
        <end position="187"/>
    </location>
</feature>
<feature type="helix" evidence="23">
    <location>
        <begin position="190"/>
        <end position="192"/>
    </location>
</feature>
<feature type="strand" evidence="23">
    <location>
        <begin position="238"/>
        <end position="244"/>
    </location>
</feature>
<feature type="strand" evidence="23">
    <location>
        <begin position="248"/>
        <end position="260"/>
    </location>
</feature>
<feature type="turn" evidence="23">
    <location>
        <begin position="262"/>
        <end position="264"/>
    </location>
</feature>
<feature type="strand" evidence="23">
    <location>
        <begin position="276"/>
        <end position="279"/>
    </location>
</feature>
<feature type="helix" evidence="23">
    <location>
        <begin position="284"/>
        <end position="287"/>
    </location>
</feature>
<feature type="strand" evidence="23">
    <location>
        <begin position="292"/>
        <end position="294"/>
    </location>
</feature>
<feature type="turn" evidence="23">
    <location>
        <begin position="295"/>
        <end position="297"/>
    </location>
</feature>
<feature type="strand" evidence="23">
    <location>
        <begin position="298"/>
        <end position="304"/>
    </location>
</feature>
<feature type="strand" evidence="23">
    <location>
        <begin position="309"/>
        <end position="320"/>
    </location>
</feature>
<feature type="strand" evidence="23">
    <location>
        <begin position="349"/>
        <end position="354"/>
    </location>
</feature>
<feature type="strand" evidence="23">
    <location>
        <begin position="359"/>
        <end position="371"/>
    </location>
</feature>
<feature type="strand" evidence="23">
    <location>
        <begin position="374"/>
        <end position="379"/>
    </location>
</feature>
<feature type="helix" evidence="23">
    <location>
        <begin position="385"/>
        <end position="387"/>
    </location>
</feature>
<feature type="strand" evidence="23">
    <location>
        <begin position="396"/>
        <end position="400"/>
    </location>
</feature>
<feature type="strand" evidence="23">
    <location>
        <begin position="406"/>
        <end position="410"/>
    </location>
</feature>
<feature type="strand" evidence="23">
    <location>
        <begin position="421"/>
        <end position="428"/>
    </location>
</feature>
<feature type="strand" evidence="23">
    <location>
        <begin position="436"/>
        <end position="438"/>
    </location>
</feature>
<feature type="strand" evidence="23">
    <location>
        <begin position="446"/>
        <end position="449"/>
    </location>
</feature>
<feature type="strand" evidence="23">
    <location>
        <begin position="458"/>
        <end position="466"/>
    </location>
</feature>
<feature type="strand" evidence="23">
    <location>
        <begin position="468"/>
        <end position="474"/>
    </location>
</feature>
<protein>
    <recommendedName>
        <fullName>Thrombopoietin receptor</fullName>
        <shortName>TPO-R</shortName>
    </recommendedName>
    <alternativeName>
        <fullName>Myeloproliferative leukemia protein</fullName>
    </alternativeName>
    <alternativeName>
        <fullName>Proto-oncogene c-Mpl</fullName>
    </alternativeName>
    <cdAntigenName>CD110</cdAntigenName>
</protein>
<gene>
    <name type="primary">MPL</name>
    <name type="synonym">TPOR</name>
</gene>
<name>TPOR_HUMAN</name>
<dbReference type="EMBL" id="M90102">
    <property type="protein sequence ID" value="AAA69971.1"/>
    <property type="molecule type" value="mRNA"/>
</dbReference>
<dbReference type="EMBL" id="M90103">
    <property type="protein sequence ID" value="AAA69972.1"/>
    <property type="molecule type" value="mRNA"/>
</dbReference>
<dbReference type="EMBL" id="U68162">
    <property type="protein sequence ID" value="AAB08424.1"/>
    <property type="molecule type" value="Genomic_DNA"/>
</dbReference>
<dbReference type="EMBL" id="U68159">
    <property type="protein sequence ID" value="AAB08424.1"/>
    <property type="status" value="JOINED"/>
    <property type="molecule type" value="Genomic_DNA"/>
</dbReference>
<dbReference type="EMBL" id="U68160">
    <property type="protein sequence ID" value="AAB08424.1"/>
    <property type="status" value="JOINED"/>
    <property type="molecule type" value="Genomic_DNA"/>
</dbReference>
<dbReference type="EMBL" id="U68161">
    <property type="protein sequence ID" value="AAB08424.1"/>
    <property type="status" value="JOINED"/>
    <property type="molecule type" value="Genomic_DNA"/>
</dbReference>
<dbReference type="EMBL" id="U68162">
    <property type="protein sequence ID" value="AAB08425.1"/>
    <property type="molecule type" value="Genomic_DNA"/>
</dbReference>
<dbReference type="EMBL" id="U68159">
    <property type="protein sequence ID" value="AAB08425.1"/>
    <property type="status" value="JOINED"/>
    <property type="molecule type" value="Genomic_DNA"/>
</dbReference>
<dbReference type="EMBL" id="U68160">
    <property type="protein sequence ID" value="AAB08425.1"/>
    <property type="status" value="JOINED"/>
    <property type="molecule type" value="Genomic_DNA"/>
</dbReference>
<dbReference type="EMBL" id="U68161">
    <property type="protein sequence ID" value="AAB08425.1"/>
    <property type="status" value="JOINED"/>
    <property type="molecule type" value="Genomic_DNA"/>
</dbReference>
<dbReference type="EMBL" id="AL139289">
    <property type="status" value="NOT_ANNOTATED_CDS"/>
    <property type="molecule type" value="Genomic_DNA"/>
</dbReference>
<dbReference type="EMBL" id="CH471059">
    <property type="protein sequence ID" value="EAX07103.1"/>
    <property type="molecule type" value="Genomic_DNA"/>
</dbReference>
<dbReference type="CCDS" id="CCDS483.1">
    <molecule id="P40238-1"/>
</dbReference>
<dbReference type="PIR" id="A45266">
    <property type="entry name" value="A45266"/>
</dbReference>
<dbReference type="PIR" id="B45266">
    <property type="entry name" value="B45266"/>
</dbReference>
<dbReference type="RefSeq" id="NP_005364.1">
    <molecule id="P40238-1"/>
    <property type="nucleotide sequence ID" value="NM_005373.3"/>
</dbReference>
<dbReference type="PDB" id="8G04">
    <property type="method" value="EM"/>
    <property type="resolution" value="3.40 A"/>
    <property type="chains" value="B/C=26-635"/>
</dbReference>
<dbReference type="PDBsum" id="8G04"/>
<dbReference type="EMDB" id="EMD-29644"/>
<dbReference type="SMR" id="P40238"/>
<dbReference type="BioGRID" id="110492">
    <property type="interactions" value="45"/>
</dbReference>
<dbReference type="CORUM" id="P40238"/>
<dbReference type="DIP" id="DIP-5730N"/>
<dbReference type="ELM" id="P40238"/>
<dbReference type="FunCoup" id="P40238">
    <property type="interactions" value="384"/>
</dbReference>
<dbReference type="IntAct" id="P40238">
    <property type="interactions" value="30"/>
</dbReference>
<dbReference type="STRING" id="9606.ENSP00000361548"/>
<dbReference type="BindingDB" id="P40238"/>
<dbReference type="ChEMBL" id="CHEMBL1864"/>
<dbReference type="DrugBank" id="DB11995">
    <property type="generic name" value="Avatrombopag"/>
</dbReference>
<dbReference type="DrugBank" id="DB06210">
    <property type="generic name" value="Eltrombopag"/>
</dbReference>
<dbReference type="DrugBank" id="DB13125">
    <property type="generic name" value="Lusutrombopag"/>
</dbReference>
<dbReference type="DrugBank" id="DB05332">
    <property type="generic name" value="Romiplostim"/>
</dbReference>
<dbReference type="DrugBank" id="DB05930">
    <property type="generic name" value="SB-559448"/>
</dbReference>
<dbReference type="DrugBank" id="DB06436">
    <property type="generic name" value="Semaxanib"/>
</dbReference>
<dbReference type="DrugBank" id="DB06534">
    <property type="generic name" value="Thrombopoietin"/>
</dbReference>
<dbReference type="DrugCentral" id="P40238"/>
<dbReference type="GuidetoPHARMACOLOGY" id="1722"/>
<dbReference type="GlyConnect" id="1803">
    <property type="glycosylation" value="1 N-Linked glycan (1 site)"/>
</dbReference>
<dbReference type="GlyCosmos" id="P40238">
    <property type="glycosylation" value="4 sites, 1 glycan"/>
</dbReference>
<dbReference type="GlyGen" id="P40238">
    <property type="glycosylation" value="9 sites, 1 N-linked glycan (1 site)"/>
</dbReference>
<dbReference type="iPTMnet" id="P40238"/>
<dbReference type="PhosphoSitePlus" id="P40238"/>
<dbReference type="BioMuta" id="MPL"/>
<dbReference type="DMDM" id="730980"/>
<dbReference type="jPOST" id="P40238"/>
<dbReference type="MassIVE" id="P40238"/>
<dbReference type="PaxDb" id="9606-ENSP00000361548"/>
<dbReference type="PeptideAtlas" id="P40238"/>
<dbReference type="ProteomicsDB" id="55354">
    <molecule id="P40238-1"/>
</dbReference>
<dbReference type="ProteomicsDB" id="55355">
    <molecule id="P40238-2"/>
</dbReference>
<dbReference type="ABCD" id="P40238">
    <property type="antibodies" value="28 sequenced antibodies"/>
</dbReference>
<dbReference type="Antibodypedia" id="2379">
    <property type="antibodies" value="374 antibodies from 32 providers"/>
</dbReference>
<dbReference type="DNASU" id="4352"/>
<dbReference type="Ensembl" id="ENST00000372470.9">
    <molecule id="P40238-1"/>
    <property type="protein sequence ID" value="ENSP00000361548.3"/>
    <property type="gene ID" value="ENSG00000117400.18"/>
</dbReference>
<dbReference type="GeneID" id="4352"/>
<dbReference type="KEGG" id="hsa:4352"/>
<dbReference type="MANE-Select" id="ENST00000372470.9">
    <property type="protein sequence ID" value="ENSP00000361548.3"/>
    <property type="RefSeq nucleotide sequence ID" value="NM_005373.3"/>
    <property type="RefSeq protein sequence ID" value="NP_005364.1"/>
</dbReference>
<dbReference type="UCSC" id="uc001ciw.4">
    <molecule id="P40238-1"/>
    <property type="organism name" value="human"/>
</dbReference>
<dbReference type="AGR" id="HGNC:7217"/>
<dbReference type="CTD" id="4352"/>
<dbReference type="DisGeNET" id="4352"/>
<dbReference type="GeneCards" id="MPL"/>
<dbReference type="HGNC" id="HGNC:7217">
    <property type="gene designation" value="MPL"/>
</dbReference>
<dbReference type="HPA" id="ENSG00000117400">
    <property type="expression patterns" value="Low tissue specificity"/>
</dbReference>
<dbReference type="MalaCards" id="MPL"/>
<dbReference type="MIM" id="159530">
    <property type="type" value="gene"/>
</dbReference>
<dbReference type="MIM" id="254450">
    <property type="type" value="phenotype"/>
</dbReference>
<dbReference type="MIM" id="601977">
    <property type="type" value="phenotype"/>
</dbReference>
<dbReference type="MIM" id="604498">
    <property type="type" value="phenotype"/>
</dbReference>
<dbReference type="neXtProt" id="NX_P40238"/>
<dbReference type="OpenTargets" id="ENSG00000117400"/>
<dbReference type="Orphanet" id="3319">
    <property type="disease" value="Congenital amegakaryocytic thrombocytopenia"/>
</dbReference>
<dbReference type="Orphanet" id="3318">
    <property type="disease" value="Essential thrombocythemia"/>
</dbReference>
<dbReference type="Orphanet" id="71493">
    <property type="disease" value="Familial thrombocytosis"/>
</dbReference>
<dbReference type="Orphanet" id="397692">
    <property type="disease" value="Hereditary isolated aplastic anemia"/>
</dbReference>
<dbReference type="Orphanet" id="824">
    <property type="disease" value="Primary myelofibrosis"/>
</dbReference>
<dbReference type="PharmGKB" id="PA30923"/>
<dbReference type="VEuPathDB" id="HostDB:ENSG00000117400"/>
<dbReference type="eggNOG" id="ENOG502RYN1">
    <property type="taxonomic scope" value="Eukaryota"/>
</dbReference>
<dbReference type="GeneTree" id="ENSGT00940000161225"/>
<dbReference type="HOGENOM" id="CLU_029931_1_0_1"/>
<dbReference type="InParanoid" id="P40238"/>
<dbReference type="OMA" id="HGPTYQG"/>
<dbReference type="OrthoDB" id="8608526at2759"/>
<dbReference type="PAN-GO" id="P40238">
    <property type="GO annotations" value="5 GO annotations based on evolutionary models"/>
</dbReference>
<dbReference type="PhylomeDB" id="P40238"/>
<dbReference type="TreeFam" id="TF336573"/>
<dbReference type="PathwayCommons" id="P40238"/>
<dbReference type="Reactome" id="R-HSA-76009">
    <property type="pathway name" value="Platelet Aggregation (Plug Formation)"/>
</dbReference>
<dbReference type="SignaLink" id="P40238"/>
<dbReference type="SIGNOR" id="P40238"/>
<dbReference type="BioGRID-ORCS" id="4352">
    <property type="hits" value="15 hits in 1152 CRISPR screens"/>
</dbReference>
<dbReference type="ChiTaRS" id="MPL">
    <property type="organism name" value="human"/>
</dbReference>
<dbReference type="GeneWiki" id="Thrombopoietin_receptor"/>
<dbReference type="GenomeRNAi" id="4352"/>
<dbReference type="Pharos" id="P40238">
    <property type="development level" value="Tclin"/>
</dbReference>
<dbReference type="PRO" id="PR:P40238"/>
<dbReference type="Proteomes" id="UP000005640">
    <property type="component" value="Chromosome 1"/>
</dbReference>
<dbReference type="RNAct" id="P40238">
    <property type="molecule type" value="protein"/>
</dbReference>
<dbReference type="Bgee" id="ENSG00000117400">
    <property type="expression patterns" value="Expressed in male germ line stem cell (sensu Vertebrata) in testis and 98 other cell types or tissues"/>
</dbReference>
<dbReference type="ExpressionAtlas" id="P40238">
    <property type="expression patterns" value="baseline and differential"/>
</dbReference>
<dbReference type="GO" id="GO:0009986">
    <property type="term" value="C:cell surface"/>
    <property type="evidence" value="ECO:0000314"/>
    <property type="project" value="UniProtKB"/>
</dbReference>
<dbReference type="GO" id="GO:0009897">
    <property type="term" value="C:external side of plasma membrane"/>
    <property type="evidence" value="ECO:0000318"/>
    <property type="project" value="GO_Central"/>
</dbReference>
<dbReference type="GO" id="GO:0005794">
    <property type="term" value="C:Golgi apparatus"/>
    <property type="evidence" value="ECO:0000314"/>
    <property type="project" value="UniProtKB"/>
</dbReference>
<dbReference type="GO" id="GO:0043025">
    <property type="term" value="C:neuronal cell body"/>
    <property type="evidence" value="ECO:0007669"/>
    <property type="project" value="Ensembl"/>
</dbReference>
<dbReference type="GO" id="GO:0031965">
    <property type="term" value="C:nuclear membrane"/>
    <property type="evidence" value="ECO:0000314"/>
    <property type="project" value="HPA"/>
</dbReference>
<dbReference type="GO" id="GO:0005886">
    <property type="term" value="C:plasma membrane"/>
    <property type="evidence" value="ECO:0000314"/>
    <property type="project" value="HPA"/>
</dbReference>
<dbReference type="GO" id="GO:0038164">
    <property type="term" value="F:thrombopoietin receptor activity"/>
    <property type="evidence" value="ECO:0000315"/>
    <property type="project" value="UniProtKB"/>
</dbReference>
<dbReference type="GO" id="GO:1990960">
    <property type="term" value="P:basophil homeostasis"/>
    <property type="evidence" value="ECO:0007669"/>
    <property type="project" value="Ensembl"/>
</dbReference>
<dbReference type="GO" id="GO:0071456">
    <property type="term" value="P:cellular response to hypoxia"/>
    <property type="evidence" value="ECO:0007669"/>
    <property type="project" value="Ensembl"/>
</dbReference>
<dbReference type="GO" id="GO:1990959">
    <property type="term" value="P:eosinophil homeostasis"/>
    <property type="evidence" value="ECO:0007669"/>
    <property type="project" value="Ensembl"/>
</dbReference>
<dbReference type="GO" id="GO:0035702">
    <property type="term" value="P:monocyte homeostasis"/>
    <property type="evidence" value="ECO:0007669"/>
    <property type="project" value="Ensembl"/>
</dbReference>
<dbReference type="GO" id="GO:0001780">
    <property type="term" value="P:neutrophil homeostasis"/>
    <property type="evidence" value="ECO:0007669"/>
    <property type="project" value="Ensembl"/>
</dbReference>
<dbReference type="GO" id="GO:0050671">
    <property type="term" value="P:positive regulation of lymphocyte proliferation"/>
    <property type="evidence" value="ECO:0007669"/>
    <property type="project" value="Ensembl"/>
</dbReference>
<dbReference type="GO" id="GO:1905221">
    <property type="term" value="P:positive regulation of platelet formation"/>
    <property type="evidence" value="ECO:0007669"/>
    <property type="project" value="Ensembl"/>
</dbReference>
<dbReference type="GO" id="GO:0038163">
    <property type="term" value="P:thrombopoietin-mediated signaling pathway"/>
    <property type="evidence" value="ECO:0000314"/>
    <property type="project" value="UniProt"/>
</dbReference>
<dbReference type="CDD" id="cd00063">
    <property type="entry name" value="FN3"/>
    <property type="match status" value="2"/>
</dbReference>
<dbReference type="FunFam" id="2.60.40.10:FF:001270">
    <property type="entry name" value="MPL proto-oncogene, thrombopoietin receptor"/>
    <property type="match status" value="1"/>
</dbReference>
<dbReference type="FunFam" id="2.60.40.10:FF:001271">
    <property type="entry name" value="MPL proto-oncogene, thrombopoietin receptor"/>
    <property type="match status" value="1"/>
</dbReference>
<dbReference type="FunFam" id="2.60.40.10:FF:001457">
    <property type="entry name" value="MPL proto-oncogene, thrombopoietin receptor"/>
    <property type="match status" value="1"/>
</dbReference>
<dbReference type="Gene3D" id="2.60.40.10">
    <property type="entry name" value="Immunoglobulins"/>
    <property type="match status" value="4"/>
</dbReference>
<dbReference type="InterPro" id="IPR003961">
    <property type="entry name" value="FN3_dom"/>
</dbReference>
<dbReference type="InterPro" id="IPR036116">
    <property type="entry name" value="FN3_sf"/>
</dbReference>
<dbReference type="InterPro" id="IPR015152">
    <property type="entry name" value="Growth/epo_recpt_lig-bind"/>
</dbReference>
<dbReference type="InterPro" id="IPR013783">
    <property type="entry name" value="Ig-like_fold"/>
</dbReference>
<dbReference type="InterPro" id="IPR003528">
    <property type="entry name" value="Long_hematopoietin_rcpt_CS"/>
</dbReference>
<dbReference type="PANTHER" id="PTHR23037">
    <property type="entry name" value="CYTOKINE RECEPTOR"/>
    <property type="match status" value="1"/>
</dbReference>
<dbReference type="PANTHER" id="PTHR23037:SF28">
    <property type="entry name" value="ERYTHROPOIETIN RECEPTOR"/>
    <property type="match status" value="1"/>
</dbReference>
<dbReference type="Pfam" id="PF09067">
    <property type="entry name" value="EpoR_lig-bind"/>
    <property type="match status" value="1"/>
</dbReference>
<dbReference type="SMART" id="SM00060">
    <property type="entry name" value="FN3"/>
    <property type="match status" value="2"/>
</dbReference>
<dbReference type="SUPFAM" id="SSF49265">
    <property type="entry name" value="Fibronectin type III"/>
    <property type="match status" value="3"/>
</dbReference>
<dbReference type="PROSITE" id="PS50853">
    <property type="entry name" value="FN3"/>
    <property type="match status" value="2"/>
</dbReference>
<dbReference type="PROSITE" id="PS01352">
    <property type="entry name" value="HEMATOPO_REC_L_F1"/>
    <property type="match status" value="1"/>
</dbReference>
<proteinExistence type="evidence at protein level"/>
<evidence type="ECO:0000250" key="1">
    <source>
        <dbReference type="UniProtKB" id="Q08351"/>
    </source>
</evidence>
<evidence type="ECO:0000255" key="2"/>
<evidence type="ECO:0000255" key="3">
    <source>
        <dbReference type="PROSITE-ProRule" id="PRU00316"/>
    </source>
</evidence>
<evidence type="ECO:0000256" key="4">
    <source>
        <dbReference type="SAM" id="MobiDB-lite"/>
    </source>
</evidence>
<evidence type="ECO:0000269" key="5">
    <source>
    </source>
</evidence>
<evidence type="ECO:0000269" key="6">
    <source>
    </source>
</evidence>
<evidence type="ECO:0000269" key="7">
    <source>
    </source>
</evidence>
<evidence type="ECO:0000269" key="8">
    <source>
    </source>
</evidence>
<evidence type="ECO:0000269" key="9">
    <source>
    </source>
</evidence>
<evidence type="ECO:0000269" key="10">
    <source>
    </source>
</evidence>
<evidence type="ECO:0000269" key="11">
    <source>
    </source>
</evidence>
<evidence type="ECO:0000269" key="12">
    <source>
    </source>
</evidence>
<evidence type="ECO:0000269" key="13">
    <source>
    </source>
</evidence>
<evidence type="ECO:0000269" key="14">
    <source>
    </source>
</evidence>
<evidence type="ECO:0000269" key="15">
    <source>
    </source>
</evidence>
<evidence type="ECO:0000269" key="16">
    <source>
    </source>
</evidence>
<evidence type="ECO:0000269" key="17">
    <source>
    </source>
</evidence>
<evidence type="ECO:0000269" key="18">
    <source>
    </source>
</evidence>
<evidence type="ECO:0000269" key="19">
    <source>
    </source>
</evidence>
<evidence type="ECO:0000303" key="20">
    <source>
    </source>
</evidence>
<evidence type="ECO:0000305" key="21"/>
<evidence type="ECO:0007744" key="22">
    <source>
        <dbReference type="PDB" id="8G04"/>
    </source>
</evidence>
<evidence type="ECO:0007829" key="23">
    <source>
        <dbReference type="PDB" id="8G04"/>
    </source>
</evidence>
<keyword id="KW-0002">3D-structure</keyword>
<keyword id="KW-0025">Alternative splicing</keyword>
<keyword id="KW-1003">Cell membrane</keyword>
<keyword id="KW-0225">Disease variant</keyword>
<keyword id="KW-1015">Disulfide bond</keyword>
<keyword id="KW-0325">Glycoprotein</keyword>
<keyword id="KW-0333">Golgi apparatus</keyword>
<keyword id="KW-1017">Isopeptide bond</keyword>
<keyword id="KW-0472">Membrane</keyword>
<keyword id="KW-0597">Phosphoprotein</keyword>
<keyword id="KW-1267">Proteomics identification</keyword>
<keyword id="KW-0675">Receptor</keyword>
<keyword id="KW-1185">Reference proteome</keyword>
<keyword id="KW-0677">Repeat</keyword>
<keyword id="KW-0732">Signal</keyword>
<keyword id="KW-0812">Transmembrane</keyword>
<keyword id="KW-1133">Transmembrane helix</keyword>
<keyword id="KW-0832">Ubl conjugation</keyword>
<comment type="function">
    <text evidence="9 19">Receptor for thrombopoietin that regulates hematopoietic stem cell renewal, megakaryocyte differentiation, and platelet formation. Upon activation by THPO, induces rapid tyrosine phosphorylation and activation of JAK2, providing docking sites for many signaling proteins such as STAT5, SHIP/INPP5D, GRB2, SOS1 and PI3K (PubMed:15899890, PubMed:37633268). In turn, These signaling cascades lead to the proliferation, survival, and differentiation of megakaryocytes, ultimately leading to increased platelet production.</text>
</comment>
<comment type="subunit">
    <text evidence="6 9 16 17 18 19">Homodimer (PubMed:32029621, PubMed:25538044). Interacts with ATXN2L (PubMed:11784712). Interacts with JAK2 and TYK2; these interactions increase MPL localization to the cell membrane (PubMed:15899890). Interacts with THPO (PubMed:37633268). Interacts with SHIP/INPP5D (PubMed:24607955). Interacts with BTK (PubMed:24607955). Interacts with SYK; this interaction negatively regulates THPO-mediated ERK1/2 signaling (PubMed:24607955).</text>
</comment>
<comment type="interaction">
    <interactant intactId="EBI-6511486">
        <id>P40238</id>
    </interactant>
    <interactant intactId="EBI-518647">
        <id>O60674</id>
        <label>JAK2</label>
    </interactant>
    <organismsDiffer>false</organismsDiffer>
    <experiments>6</experiments>
</comment>
<comment type="subcellular location">
    <subcellularLocation>
        <location evidence="9 17 18">Cell membrane</location>
        <topology>Single-pass type I membrane protein</topology>
    </subcellularLocation>
    <subcellularLocation>
        <location evidence="17">Golgi apparatus</location>
    </subcellularLocation>
    <subcellularLocation>
        <location evidence="17">Cell surface</location>
    </subcellularLocation>
</comment>
<comment type="alternative products">
    <event type="alternative splicing"/>
    <isoform>
        <id>P40238-1</id>
        <name>1</name>
        <name>C-mpl-P</name>
        <sequence type="displayed"/>
    </isoform>
    <isoform>
        <id>P40238-2</id>
        <name>2</name>
        <name>C-mpl-K</name>
        <sequence type="described" ref="VSP_001734 VSP_001735"/>
    </isoform>
</comment>
<comment type="tissue specificity">
    <text>Expressed at a low level in a large number of cells of hematopoietic origin. Isoform 1 and isoform 2 are always found to be coexpressed.</text>
</comment>
<comment type="domain">
    <text>The WSXWS motif appears to be necessary for proper protein folding and thereby efficient intracellular transport and cell-surface receptor binding.</text>
</comment>
<comment type="domain">
    <text>The box 1 motif is required for JAK interaction and/or activation.</text>
</comment>
<comment type="PTM">
    <text evidence="16">Phosphorylated at Tyr-591 in response to THPO stimulation.</text>
</comment>
<comment type="PTM">
    <text evidence="14">Ubiquitination at Lys-553 and Lys-573 targets MPL for degradation by both the lysosomal and proteasomal pathways. The E3 ubiquitin-protein ligase CBL significantly contributes to this ubiquitination.</text>
</comment>
<comment type="disease" evidence="10 17">
    <disease id="DI-01388">
        <name>Amegakaryocytic thrombocytopenia, congenital, 1</name>
        <acronym>CAMT1</acronym>
        <description>An autosomal recessive form of congenital amegakaryocytic thrombocytopenia, a hematologic disorder characterized by severe reduction of megakaryocytes and platelets at birth, and evolving into generalized bone marrow aplasia during childhood.</description>
        <dbReference type="MIM" id="604498"/>
    </disease>
    <text>The disease is caused by variants affecting the gene represented in this entry.</text>
</comment>
<comment type="disease" evidence="7 13 15 17 18">
    <disease id="DI-03401">
        <name>Thrombocythemia 2</name>
        <acronym>THCYT2</acronym>
        <description>A myeloproliferative disorder characterized by excessive platelet production, resulting in increased numbers of circulating platelets. It can be associated with spontaneous hemorrhages and thrombotic episodes.</description>
        <dbReference type="MIM" id="601977"/>
    </disease>
    <text>The disease is caused by variants affecting the gene represented in this entry.</text>
</comment>
<comment type="disease" evidence="11 12">
    <disease id="DI-03415">
        <name>Myelofibrosis with myeloid metaplasia</name>
        <acronym>MMM</acronym>
        <description>A chronic myeloproliferative disorder characterized by replacement of the bone marrow by fibrous tissue, extramedullary hematopoiesis, anemia, leukoerythroblastosis and hepatosplenomegaly.</description>
        <dbReference type="MIM" id="254450"/>
    </disease>
    <text>The disease is caused by variants affecting the gene represented in this entry.</text>
</comment>
<comment type="similarity">
    <text evidence="21">Belongs to the type I cytokine receptor family. Type 1 subfamily.</text>
</comment>
<comment type="caution">
    <text evidence="21">It is uncertain whether Met-1 or Met-8 is the initiator.</text>
</comment>
<accession>P40238</accession>
<accession>Q5JUZ0</accession>
<sequence length="635" mass="71245">MPSWALFMVTSCLLLAPQNLAQVSSQDVSLLASDSEPLKCFSRTFEDLTCFWDEEEAAPSGTYQLLYAYPREKPRACPLSSQSMPHFGTRYVCQFPDQEEVRLFFPLHLWVKNVFLNQTRTQRVLFVDSVGLPAPPSIIKAMGGSQPGELQISWEEPAPEISDFLRYELRYGPRDPKNSTGPTVIQLIATETCCPALQRPHSASALDQSPCAQPTMPWQDGPKQTSPSREASALTAEGGSCLISGLQPGNSYWLQLRSEPDGISLGGSWGSWSLPVTVDLPGDAVALGLQCFTLDLKNVTCQWQQQDHASSQGFFYHSRARCCPRDRYPIWENCEEEEKTNPGLQTPQFSRCHFKSRNDSIIHILVEVTTAPGTVHSYLGSPFWIHQAVRLPTPNLHWREISSGHLELEWQHPSSWAAQETCYQLRYTGEGHQDWKVLEPPLGARGGTLELRPRSRYRLQLRARLNGPTYQGPWSSWSDPTRVETATETAWISLVTALHLVLGLSAVLGLLLLRWQFPAHYRRLRHALWPSLPDLHRVLGQYLRDTAALSPPKATVSDTCEEVEPSLLEILPKSSERTPLPLCSSQAQMDYRRLQPSCLGTMPLSVCPPMAESGSCCTTHIANHSYLPLSYWQQP</sequence>
<organism>
    <name type="scientific">Homo sapiens</name>
    <name type="common">Human</name>
    <dbReference type="NCBI Taxonomy" id="9606"/>
    <lineage>
        <taxon>Eukaryota</taxon>
        <taxon>Metazoa</taxon>
        <taxon>Chordata</taxon>
        <taxon>Craniata</taxon>
        <taxon>Vertebrata</taxon>
        <taxon>Euteleostomi</taxon>
        <taxon>Mammalia</taxon>
        <taxon>Eutheria</taxon>
        <taxon>Euarchontoglires</taxon>
        <taxon>Primates</taxon>
        <taxon>Haplorrhini</taxon>
        <taxon>Catarrhini</taxon>
        <taxon>Hominidae</taxon>
        <taxon>Homo</taxon>
    </lineage>
</organism>